<accession>Q58826</accession>
<name>COFH_METJA</name>
<keyword id="KW-0004">4Fe-4S</keyword>
<keyword id="KW-0408">Iron</keyword>
<keyword id="KW-0411">Iron-sulfur</keyword>
<keyword id="KW-0479">Metal-binding</keyword>
<keyword id="KW-1185">Reference proteome</keyword>
<keyword id="KW-0949">S-adenosyl-L-methionine</keyword>
<keyword id="KW-0808">Transferase</keyword>
<evidence type="ECO:0000250" key="1"/>
<evidence type="ECO:0000255" key="2">
    <source>
        <dbReference type="PROSITE-ProRule" id="PRU01266"/>
    </source>
</evidence>
<evidence type="ECO:0000269" key="3">
    <source>
    </source>
</evidence>
<evidence type="ECO:0000269" key="4">
    <source>
    </source>
</evidence>
<evidence type="ECO:0000269" key="5">
    <source>
    </source>
</evidence>
<evidence type="ECO:0000305" key="6"/>
<protein>
    <recommendedName>
        <fullName>5-amino-6-(D-ribitylamino)uracil--L-tyrosine 4-hydroxyphenyl transferase</fullName>
        <ecNumber evidence="3 4 5">2.5.1.147</ecNumber>
    </recommendedName>
    <alternativeName>
        <fullName>FO synthase subunit 2</fullName>
    </alternativeName>
</protein>
<reference key="1">
    <citation type="journal article" date="1996" name="Science">
        <title>Complete genome sequence of the methanogenic archaeon, Methanococcus jannaschii.</title>
        <authorList>
            <person name="Bult C.J."/>
            <person name="White O."/>
            <person name="Olsen G.J."/>
            <person name="Zhou L."/>
            <person name="Fleischmann R.D."/>
            <person name="Sutton G.G."/>
            <person name="Blake J.A."/>
            <person name="FitzGerald L.M."/>
            <person name="Clayton R.A."/>
            <person name="Gocayne J.D."/>
            <person name="Kerlavage A.R."/>
            <person name="Dougherty B.A."/>
            <person name="Tomb J.-F."/>
            <person name="Adams M.D."/>
            <person name="Reich C.I."/>
            <person name="Overbeek R."/>
            <person name="Kirkness E.F."/>
            <person name="Weinstock K.G."/>
            <person name="Merrick J.M."/>
            <person name="Glodek A."/>
            <person name="Scott J.L."/>
            <person name="Geoghagen N.S.M."/>
            <person name="Weidman J.F."/>
            <person name="Fuhrmann J.L."/>
            <person name="Nguyen D."/>
            <person name="Utterback T.R."/>
            <person name="Kelley J.M."/>
            <person name="Peterson J.D."/>
            <person name="Sadow P.W."/>
            <person name="Hanna M.C."/>
            <person name="Cotton M.D."/>
            <person name="Roberts K.M."/>
            <person name="Hurst M.A."/>
            <person name="Kaine B.P."/>
            <person name="Borodovsky M."/>
            <person name="Klenk H.-P."/>
            <person name="Fraser C.M."/>
            <person name="Smith H.O."/>
            <person name="Woese C.R."/>
            <person name="Venter J.C."/>
        </authorList>
    </citation>
    <scope>NUCLEOTIDE SEQUENCE [LARGE SCALE GENOMIC DNA]</scope>
    <source>
        <strain>ATCC 43067 / DSM 2661 / JAL-1 / JCM 10045 / NBRC 100440</strain>
    </source>
</reference>
<reference key="2">
    <citation type="journal article" date="2003" name="Arch. Microbiol.">
        <title>Identification of the 7,8-didemethyl-8-hydroxy-5-deazariboflavin synthase required for coenzyme F(420) biosynthesis.</title>
        <authorList>
            <person name="Graham D.E."/>
            <person name="Xu H."/>
            <person name="White R.H."/>
        </authorList>
    </citation>
    <scope>FUNCTION</scope>
    <scope>CATALYTIC ACTIVITY</scope>
    <scope>CHARACTERIZATION</scope>
    <source>
        <strain>ATCC 43067 / DSM 2661 / JAL-1 / JCM 10045 / NBRC 100440</strain>
    </source>
</reference>
<reference key="3">
    <citation type="journal article" date="2012" name="J. Am. Chem. Soc.">
        <title>Biosynthesis of F0, precursor of the F420 cofactor, requires a unique two radical-SAM domain enzyme and tyrosine as substrate.</title>
        <authorList>
            <person name="Decamps L."/>
            <person name="Philmus B."/>
            <person name="Benjdia A."/>
            <person name="White R."/>
            <person name="Begley T.P."/>
            <person name="Berteau O."/>
        </authorList>
    </citation>
    <scope>FUNCTION</scope>
    <scope>CATALYTIC ACTIVITY</scope>
</reference>
<reference key="4">
    <citation type="journal article" date="2015" name="J. Am. Chem. Soc.">
        <title>Biosynthetic versatility and coordinated action of 5'-deoxyadenosyl radicals in deazaflavin biosynthesis.</title>
        <authorList>
            <person name="Philmus B."/>
            <person name="Decamps L."/>
            <person name="Berteau O."/>
            <person name="Begley T.P."/>
        </authorList>
    </citation>
    <scope>FUNCTION</scope>
    <scope>CATALYTIC ACTIVITY</scope>
    <scope>REACTION MECHANISM</scope>
</reference>
<sequence length="359" mass="40806">MDPNKFREKEISKKEALELFEDNEIIFELFKFADSLRREEVGDIVTYVVNRNINFTNICVGNCRFCAFRANENDKHAYFLDIDEIAKRAVEAKKFGCTEVCIQGGLHPKIDTYYQAEILKAVHEATKPYGDIHIHAFSPMEVYFGAENAGLDIKEALKILKENGLNSMPGTAAEILDDDIRAELCPNKIKTKEWIYIIKEAHKLGIPTTATMMYGHIEEYKHWVNHLFIIKEIQEETNGFTEFVPLSFMHKYAPIYKEGKAKAGATGIEDLKVFAVSRIIFKGLIKNIQASWVKLGKKMVQVALRCGANDVGGTLIEESISRSAGAEHGVYMSVEEIRDMIKRVGLIPKERTTLYKILE</sequence>
<gene>
    <name type="primary">cofH</name>
    <name type="ordered locus">MJ1431</name>
</gene>
<proteinExistence type="evidence at protein level"/>
<organism>
    <name type="scientific">Methanocaldococcus jannaschii (strain ATCC 43067 / DSM 2661 / JAL-1 / JCM 10045 / NBRC 100440)</name>
    <name type="common">Methanococcus jannaschii</name>
    <dbReference type="NCBI Taxonomy" id="243232"/>
    <lineage>
        <taxon>Archaea</taxon>
        <taxon>Methanobacteriati</taxon>
        <taxon>Methanobacteriota</taxon>
        <taxon>Methanomada group</taxon>
        <taxon>Methanococci</taxon>
        <taxon>Methanococcales</taxon>
        <taxon>Methanocaldococcaceae</taxon>
        <taxon>Methanocaldococcus</taxon>
    </lineage>
</organism>
<comment type="function">
    <text evidence="3 4 5">Catalyzes the radical-mediated synthesis of 5-amino-5-(4-hydroxybenzyl)-6-(D-ribitylimino)-5,6-dihydrouracil from 5-amino-6-(D-ribitylamino)uracil and L-tyrosine.</text>
</comment>
<comment type="catalytic activity">
    <reaction evidence="3 4 5">
        <text>5-amino-6-(D-ribitylamino)uracil + L-tyrosine + S-adenosyl-L-methionine = 5-amino-5-(4-hydroxybenzyl)-6-(D-ribitylimino)-5,6-dihydrouracil + 2-iminoacetate + 5'-deoxyadenosine + L-methionine + H(+)</text>
        <dbReference type="Rhea" id="RHEA:55200"/>
        <dbReference type="ChEBI" id="CHEBI:15378"/>
        <dbReference type="ChEBI" id="CHEBI:15934"/>
        <dbReference type="ChEBI" id="CHEBI:17319"/>
        <dbReference type="ChEBI" id="CHEBI:57844"/>
        <dbReference type="ChEBI" id="CHEBI:58315"/>
        <dbReference type="ChEBI" id="CHEBI:59789"/>
        <dbReference type="ChEBI" id="CHEBI:77846"/>
        <dbReference type="ChEBI" id="CHEBI:85936"/>
        <dbReference type="EC" id="2.5.1.147"/>
    </reaction>
</comment>
<comment type="cofactor">
    <cofactor>
        <name>[4Fe-4S] cluster</name>
        <dbReference type="ChEBI" id="CHEBI:49883"/>
    </cofactor>
    <text>Binds 1 [4Fe-4S] cluster. The cluster is coordinated with 3 cysteines and an exchangeable S-adenosyl-L-methionine.</text>
</comment>
<comment type="pathway">
    <text>Cofactor biosynthesis; coenzyme F0 biosynthesis.</text>
</comment>
<comment type="subunit">
    <text>Consists of two subunits, CofG and CofH.</text>
</comment>
<comment type="similarity">
    <text evidence="6">Belongs to the radical SAM superfamily. CofH family.</text>
</comment>
<dbReference type="EC" id="2.5.1.147" evidence="3 4 5"/>
<dbReference type="EMBL" id="L77117">
    <property type="protein sequence ID" value="AAB99441.1"/>
    <property type="molecule type" value="Genomic_DNA"/>
</dbReference>
<dbReference type="PIR" id="F64478">
    <property type="entry name" value="F64478"/>
</dbReference>
<dbReference type="RefSeq" id="WP_010870949.1">
    <property type="nucleotide sequence ID" value="NC_000909.1"/>
</dbReference>
<dbReference type="SMR" id="Q58826"/>
<dbReference type="FunCoup" id="Q58826">
    <property type="interactions" value="110"/>
</dbReference>
<dbReference type="STRING" id="243232.MJ_1431"/>
<dbReference type="PaxDb" id="243232-MJ_1431"/>
<dbReference type="DNASU" id="1452335"/>
<dbReference type="EnsemblBacteria" id="AAB99441">
    <property type="protein sequence ID" value="AAB99441"/>
    <property type="gene ID" value="MJ_1431"/>
</dbReference>
<dbReference type="GeneID" id="1452335"/>
<dbReference type="KEGG" id="mja:MJ_1431"/>
<dbReference type="eggNOG" id="arCOG00656">
    <property type="taxonomic scope" value="Archaea"/>
</dbReference>
<dbReference type="HOGENOM" id="CLU_040406_1_1_2"/>
<dbReference type="InParanoid" id="Q58826"/>
<dbReference type="OrthoDB" id="8186at2157"/>
<dbReference type="PhylomeDB" id="Q58826"/>
<dbReference type="BioCyc" id="MetaCyc:MONOMER-12179"/>
<dbReference type="BRENDA" id="2.5.1.147">
    <property type="organism ID" value="3260"/>
</dbReference>
<dbReference type="UniPathway" id="UPA00072"/>
<dbReference type="Proteomes" id="UP000000805">
    <property type="component" value="Chromosome"/>
</dbReference>
<dbReference type="GO" id="GO:0051539">
    <property type="term" value="F:4 iron, 4 sulfur cluster binding"/>
    <property type="evidence" value="ECO:0007669"/>
    <property type="project" value="UniProtKB-KW"/>
</dbReference>
<dbReference type="GO" id="GO:0141093">
    <property type="term" value="F:5-amino-6-(D-ribitylamino)uracil--L-tyrosine 4-hydroxyphenyl transferase activity"/>
    <property type="evidence" value="ECO:0007669"/>
    <property type="project" value="UniProtKB-EC"/>
</dbReference>
<dbReference type="GO" id="GO:0044689">
    <property type="term" value="F:7,8-didemethyl-8-hydroxy-5-deazariboflavin synthase activity"/>
    <property type="evidence" value="ECO:0000318"/>
    <property type="project" value="GO_Central"/>
</dbReference>
<dbReference type="GO" id="GO:0005506">
    <property type="term" value="F:iron ion binding"/>
    <property type="evidence" value="ECO:0007669"/>
    <property type="project" value="UniProtKB-UniRule"/>
</dbReference>
<dbReference type="CDD" id="cd01335">
    <property type="entry name" value="Radical_SAM"/>
    <property type="match status" value="1"/>
</dbReference>
<dbReference type="FunFam" id="3.20.20.70:FF:000134">
    <property type="entry name" value="7,8-didemethyl-8-hydroxy-5-deazariboflavin synthase"/>
    <property type="match status" value="1"/>
</dbReference>
<dbReference type="Gene3D" id="3.20.20.70">
    <property type="entry name" value="Aldolase class I"/>
    <property type="match status" value="1"/>
</dbReference>
<dbReference type="HAMAP" id="MF_01612">
    <property type="entry name" value="FO_synth_sub2"/>
    <property type="match status" value="1"/>
</dbReference>
<dbReference type="InterPro" id="IPR013785">
    <property type="entry name" value="Aldolase_TIM"/>
</dbReference>
<dbReference type="InterPro" id="IPR045567">
    <property type="entry name" value="CofH/MnqC-like_C"/>
</dbReference>
<dbReference type="InterPro" id="IPR019940">
    <property type="entry name" value="CofH_family"/>
</dbReference>
<dbReference type="InterPro" id="IPR006638">
    <property type="entry name" value="Elp3/MiaA/NifB-like_rSAM"/>
</dbReference>
<dbReference type="InterPro" id="IPR034405">
    <property type="entry name" value="F420"/>
</dbReference>
<dbReference type="InterPro" id="IPR020050">
    <property type="entry name" value="FO_synthase_su2"/>
</dbReference>
<dbReference type="InterPro" id="IPR007197">
    <property type="entry name" value="rSAM"/>
</dbReference>
<dbReference type="NCBIfam" id="TIGR00423">
    <property type="entry name" value="CofH family radical SAM protein"/>
    <property type="match status" value="1"/>
</dbReference>
<dbReference type="NCBIfam" id="TIGR03551">
    <property type="entry name" value="F420_cofH"/>
    <property type="match status" value="1"/>
</dbReference>
<dbReference type="NCBIfam" id="NF005609">
    <property type="entry name" value="PRK07360.1"/>
    <property type="match status" value="1"/>
</dbReference>
<dbReference type="PANTHER" id="PTHR43076">
    <property type="entry name" value="FO SYNTHASE (COFH)"/>
    <property type="match status" value="1"/>
</dbReference>
<dbReference type="PANTHER" id="PTHR43076:SF1">
    <property type="entry name" value="LIPOYL SYNTHASE 2"/>
    <property type="match status" value="1"/>
</dbReference>
<dbReference type="Pfam" id="PF19288">
    <property type="entry name" value="CofH_C"/>
    <property type="match status" value="1"/>
</dbReference>
<dbReference type="Pfam" id="PF04055">
    <property type="entry name" value="Radical_SAM"/>
    <property type="match status" value="1"/>
</dbReference>
<dbReference type="PIRSF" id="PIRSF004762">
    <property type="entry name" value="CHP00423"/>
    <property type="match status" value="1"/>
</dbReference>
<dbReference type="SFLD" id="SFLDF00293">
    <property type="entry name" value="((2_3_4_5-tetrahydroxypentyl)a"/>
    <property type="match status" value="1"/>
</dbReference>
<dbReference type="SFLD" id="SFLDF00343">
    <property type="entry name" value="aminofutalosine_synthase_(mqnE"/>
    <property type="match status" value="1"/>
</dbReference>
<dbReference type="SFLD" id="SFLDF00342">
    <property type="entry name" value="cyclic_dehypoxanthine_futalosi"/>
    <property type="match status" value="1"/>
</dbReference>
<dbReference type="SFLD" id="SFLDS00029">
    <property type="entry name" value="Radical_SAM"/>
    <property type="match status" value="2"/>
</dbReference>
<dbReference type="SMART" id="SM00729">
    <property type="entry name" value="Elp3"/>
    <property type="match status" value="1"/>
</dbReference>
<dbReference type="SUPFAM" id="SSF102114">
    <property type="entry name" value="Radical SAM enzymes"/>
    <property type="match status" value="1"/>
</dbReference>
<dbReference type="PROSITE" id="PS51918">
    <property type="entry name" value="RADICAL_SAM"/>
    <property type="match status" value="1"/>
</dbReference>
<feature type="chain" id="PRO_0000141718" description="5-amino-6-(D-ribitylamino)uracil--L-tyrosine 4-hydroxyphenyl transferase">
    <location>
        <begin position="1"/>
        <end position="359"/>
    </location>
</feature>
<feature type="domain" description="Radical SAM core" evidence="2">
    <location>
        <begin position="45"/>
        <end position="278"/>
    </location>
</feature>
<feature type="binding site" evidence="1">
    <location>
        <position position="59"/>
    </location>
    <ligand>
        <name>[4Fe-4S] cluster</name>
        <dbReference type="ChEBI" id="CHEBI:49883"/>
        <note>4Fe-4S-S-AdoMet</note>
    </ligand>
</feature>
<feature type="binding site" evidence="1">
    <location>
        <position position="63"/>
    </location>
    <ligand>
        <name>[4Fe-4S] cluster</name>
        <dbReference type="ChEBI" id="CHEBI:49883"/>
        <note>4Fe-4S-S-AdoMet</note>
    </ligand>
</feature>
<feature type="binding site" evidence="1">
    <location>
        <position position="66"/>
    </location>
    <ligand>
        <name>[4Fe-4S] cluster</name>
        <dbReference type="ChEBI" id="CHEBI:49883"/>
        <note>4Fe-4S-S-AdoMet</note>
    </ligand>
</feature>